<proteinExistence type="inferred from homology"/>
<evidence type="ECO:0000255" key="1">
    <source>
        <dbReference type="HAMAP-Rule" id="MF_00415"/>
    </source>
</evidence>
<gene>
    <name evidence="1" type="primary">flgH</name>
    <name type="ordered locus">VV0966</name>
</gene>
<sequence>MKRISLIALVTLMSGCTMLEPIETPEVVNATTVVDAVEGDKSKDESSGIVDTLRGRSDPVAGDPAWAPIHPKQQPEHYAAETGSLFSVNHLSNLYDDSKPRGVGDIITVTLDEKTNASKSANADLSKSNDSSMDPLEVGGQELKIDGKYNFSYNLTNSNNFTGDASAKQSNSISGYITVEVIEVLANGNLVIRGEKWLTLNTGDEYIRLSGTIRPDDISFDNTIASNRVSNARIQYSGTGTQQDMQEPGFLARFFNVSL</sequence>
<accession>Q7MMV1</accession>
<keyword id="KW-0975">Bacterial flagellum</keyword>
<keyword id="KW-0998">Cell outer membrane</keyword>
<keyword id="KW-0449">Lipoprotein</keyword>
<keyword id="KW-0472">Membrane</keyword>
<keyword id="KW-0564">Palmitate</keyword>
<keyword id="KW-0732">Signal</keyword>
<name>FLGH_VIBVY</name>
<protein>
    <recommendedName>
        <fullName evidence="1">Flagellar L-ring protein</fullName>
    </recommendedName>
    <alternativeName>
        <fullName evidence="1">Basal body L-ring protein</fullName>
    </alternativeName>
</protein>
<comment type="function">
    <text evidence="1">Assembles around the rod to form the L-ring and probably protects the motor/basal body from shearing forces during rotation.</text>
</comment>
<comment type="subunit">
    <text evidence="1">The basal body constitutes a major portion of the flagellar organelle and consists of four rings (L,P,S, and M) mounted on a central rod.</text>
</comment>
<comment type="subcellular location">
    <subcellularLocation>
        <location evidence="1">Cell outer membrane</location>
        <topology evidence="1">Lipid-anchor</topology>
    </subcellularLocation>
    <subcellularLocation>
        <location evidence="1">Bacterial flagellum basal body</location>
    </subcellularLocation>
</comment>
<comment type="similarity">
    <text evidence="1">Belongs to the FlgH family.</text>
</comment>
<dbReference type="EMBL" id="BA000037">
    <property type="protein sequence ID" value="BAC93730.1"/>
    <property type="molecule type" value="Genomic_DNA"/>
</dbReference>
<dbReference type="RefSeq" id="WP_011149748.1">
    <property type="nucleotide sequence ID" value="NC_005139.1"/>
</dbReference>
<dbReference type="SMR" id="Q7MMV1"/>
<dbReference type="STRING" id="672.VV93_v1c08940"/>
<dbReference type="KEGG" id="vvy:VV0966"/>
<dbReference type="PATRIC" id="fig|196600.6.peg.964"/>
<dbReference type="eggNOG" id="COG2063">
    <property type="taxonomic scope" value="Bacteria"/>
</dbReference>
<dbReference type="HOGENOM" id="CLU_069313_0_2_6"/>
<dbReference type="Proteomes" id="UP000002675">
    <property type="component" value="Chromosome I"/>
</dbReference>
<dbReference type="GO" id="GO:0009427">
    <property type="term" value="C:bacterial-type flagellum basal body, distal rod, L ring"/>
    <property type="evidence" value="ECO:0007669"/>
    <property type="project" value="InterPro"/>
</dbReference>
<dbReference type="GO" id="GO:0009279">
    <property type="term" value="C:cell outer membrane"/>
    <property type="evidence" value="ECO:0007669"/>
    <property type="project" value="UniProtKB-SubCell"/>
</dbReference>
<dbReference type="GO" id="GO:0003774">
    <property type="term" value="F:cytoskeletal motor activity"/>
    <property type="evidence" value="ECO:0007669"/>
    <property type="project" value="InterPro"/>
</dbReference>
<dbReference type="GO" id="GO:0071973">
    <property type="term" value="P:bacterial-type flagellum-dependent cell motility"/>
    <property type="evidence" value="ECO:0007669"/>
    <property type="project" value="InterPro"/>
</dbReference>
<dbReference type="HAMAP" id="MF_00415">
    <property type="entry name" value="FlgH"/>
    <property type="match status" value="1"/>
</dbReference>
<dbReference type="InterPro" id="IPR000527">
    <property type="entry name" value="Flag_Lring"/>
</dbReference>
<dbReference type="NCBIfam" id="NF001302">
    <property type="entry name" value="PRK00249.1-2"/>
    <property type="match status" value="1"/>
</dbReference>
<dbReference type="PANTHER" id="PTHR34933">
    <property type="entry name" value="FLAGELLAR L-RING PROTEIN"/>
    <property type="match status" value="1"/>
</dbReference>
<dbReference type="PANTHER" id="PTHR34933:SF1">
    <property type="entry name" value="FLAGELLAR L-RING PROTEIN"/>
    <property type="match status" value="1"/>
</dbReference>
<dbReference type="Pfam" id="PF02107">
    <property type="entry name" value="FlgH"/>
    <property type="match status" value="1"/>
</dbReference>
<dbReference type="PRINTS" id="PR01008">
    <property type="entry name" value="FLGLRINGFLGH"/>
</dbReference>
<dbReference type="PROSITE" id="PS51257">
    <property type="entry name" value="PROKAR_LIPOPROTEIN"/>
    <property type="match status" value="1"/>
</dbReference>
<organism>
    <name type="scientific">Vibrio vulnificus (strain YJ016)</name>
    <dbReference type="NCBI Taxonomy" id="196600"/>
    <lineage>
        <taxon>Bacteria</taxon>
        <taxon>Pseudomonadati</taxon>
        <taxon>Pseudomonadota</taxon>
        <taxon>Gammaproteobacteria</taxon>
        <taxon>Vibrionales</taxon>
        <taxon>Vibrionaceae</taxon>
        <taxon>Vibrio</taxon>
    </lineage>
</organism>
<reference key="1">
    <citation type="journal article" date="2003" name="Genome Res.">
        <title>Comparative genome analysis of Vibrio vulnificus, a marine pathogen.</title>
        <authorList>
            <person name="Chen C.-Y."/>
            <person name="Wu K.-M."/>
            <person name="Chang Y.-C."/>
            <person name="Chang C.-H."/>
            <person name="Tsai H.-C."/>
            <person name="Liao T.-L."/>
            <person name="Liu Y.-M."/>
            <person name="Chen H.-J."/>
            <person name="Shen A.B.-T."/>
            <person name="Li J.-C."/>
            <person name="Su T.-L."/>
            <person name="Shao C.-P."/>
            <person name="Lee C.-T."/>
            <person name="Hor L.-I."/>
            <person name="Tsai S.-F."/>
        </authorList>
    </citation>
    <scope>NUCLEOTIDE SEQUENCE [LARGE SCALE GENOMIC DNA]</scope>
    <source>
        <strain>YJ016</strain>
    </source>
</reference>
<feature type="signal peptide" evidence="1">
    <location>
        <begin position="1"/>
        <end position="15"/>
    </location>
</feature>
<feature type="chain" id="PRO_0000009481" description="Flagellar L-ring protein">
    <location>
        <begin position="16"/>
        <end position="259"/>
    </location>
</feature>
<feature type="lipid moiety-binding region" description="N-palmitoyl cysteine" evidence="1">
    <location>
        <position position="16"/>
    </location>
</feature>
<feature type="lipid moiety-binding region" description="S-diacylglycerol cysteine" evidence="1">
    <location>
        <position position="16"/>
    </location>
</feature>